<protein>
    <recommendedName>
        <fullName evidence="16">Phosphatidate phosphatase LPIN1</fullName>
        <ecNumber evidence="8">3.1.3.4</ecNumber>
    </recommendedName>
    <alternativeName>
        <fullName evidence="13">Fatty liver dystrophy protein</fullName>
    </alternativeName>
    <alternativeName>
        <fullName evidence="15">Lipin-1</fullName>
    </alternativeName>
</protein>
<comment type="function">
    <text evidence="5 6 8">Acts as a magnesium-dependent phosphatidate phosphatase enzyme which catalyzes the conversion of phosphatidic acid to diacylglycerol during triglyceride, phosphatidylcholine and phosphatidylethanolamine biosynthesis and therefore controls the metabolism of fatty acids at different levels (PubMed:17158099). Is involved in adipocyte differentiation (PubMed:16049017). Also acts as nuclear transcriptional coactivator for PPARGC1A/PPARA regulatory pathway to modulate lipid metabolism gene expression (PubMed:16950137).</text>
</comment>
<comment type="function">
    <molecule>Isoform 1</molecule>
    <text evidence="11">Recruited at the mitochondrion outer membrane and is involved in mitochondrial fission by converting phosphatidic acid to diacylglycerol.</text>
</comment>
<comment type="catalytic activity">
    <reaction evidence="8">
        <text>a 1,2-diacyl-sn-glycero-3-phosphate + H2O = a 1,2-diacyl-sn-glycerol + phosphate</text>
        <dbReference type="Rhea" id="RHEA:27429"/>
        <dbReference type="ChEBI" id="CHEBI:15377"/>
        <dbReference type="ChEBI" id="CHEBI:17815"/>
        <dbReference type="ChEBI" id="CHEBI:43474"/>
        <dbReference type="ChEBI" id="CHEBI:58608"/>
        <dbReference type="EC" id="3.1.3.4"/>
    </reaction>
    <physiologicalReaction direction="left-to-right" evidence="18">
        <dbReference type="Rhea" id="RHEA:27430"/>
    </physiologicalReaction>
</comment>
<comment type="catalytic activity">
    <molecule>Isoform 2</molecule>
    <reaction evidence="1">
        <text>1-octadecanoyl-2-(4Z,7Z,10Z,13Z,16Z,19Z-docosahexaenoyl)-sn-glycero-3-phosphate + H2O = 1-octadecanoyl-2-(4Z,7Z,10Z,13Z,16Z,19Z-docosahexaenoyl)-sn-glycerol + phosphate</text>
        <dbReference type="Rhea" id="RHEA:43296"/>
        <dbReference type="ChEBI" id="CHEBI:15377"/>
        <dbReference type="ChEBI" id="CHEBI:43474"/>
        <dbReference type="ChEBI" id="CHEBI:77129"/>
        <dbReference type="ChEBI" id="CHEBI:77130"/>
    </reaction>
    <physiologicalReaction direction="left-to-right" evidence="1">
        <dbReference type="Rhea" id="RHEA:43297"/>
    </physiologicalReaction>
</comment>
<comment type="catalytic activity">
    <molecule>Isoform 1</molecule>
    <reaction evidence="1">
        <text>1-octadecanoyl-2-(4Z,7Z,10Z,13Z,16Z,19Z-docosahexaenoyl)-sn-glycero-3-phosphate + H2O = 1-octadecanoyl-2-(4Z,7Z,10Z,13Z,16Z,19Z-docosahexaenoyl)-sn-glycerol + phosphate</text>
        <dbReference type="Rhea" id="RHEA:43296"/>
        <dbReference type="ChEBI" id="CHEBI:15377"/>
        <dbReference type="ChEBI" id="CHEBI:43474"/>
        <dbReference type="ChEBI" id="CHEBI:77129"/>
        <dbReference type="ChEBI" id="CHEBI:77130"/>
    </reaction>
    <physiologicalReaction direction="left-to-right" evidence="1">
        <dbReference type="Rhea" id="RHEA:43297"/>
    </physiologicalReaction>
</comment>
<comment type="catalytic activity">
    <molecule>Isoform 2</molecule>
    <reaction evidence="1">
        <text>1-octadecanoyl-2-(5Z,8Z,11Z,14Z-eicosatetraenoyl)-sn-glycero-3-phosphate + H2O = 1-octadecanoyl-2-(5Z,8Z,11Z,14Z-eicosatetraenoyl)-sn-glycerol + phosphate</text>
        <dbReference type="Rhea" id="RHEA:43292"/>
        <dbReference type="ChEBI" id="CHEBI:15377"/>
        <dbReference type="ChEBI" id="CHEBI:43474"/>
        <dbReference type="ChEBI" id="CHEBI:75728"/>
        <dbReference type="ChEBI" id="CHEBI:77091"/>
    </reaction>
    <physiologicalReaction direction="left-to-right" evidence="1">
        <dbReference type="Rhea" id="RHEA:43293"/>
    </physiologicalReaction>
</comment>
<comment type="catalytic activity">
    <molecule>Isoform 1</molecule>
    <reaction evidence="1">
        <text>1-octadecanoyl-2-(5Z,8Z,11Z,14Z-eicosatetraenoyl)-sn-glycero-3-phosphate + H2O = 1-octadecanoyl-2-(5Z,8Z,11Z,14Z-eicosatetraenoyl)-sn-glycerol + phosphate</text>
        <dbReference type="Rhea" id="RHEA:43292"/>
        <dbReference type="ChEBI" id="CHEBI:15377"/>
        <dbReference type="ChEBI" id="CHEBI:43474"/>
        <dbReference type="ChEBI" id="CHEBI:75728"/>
        <dbReference type="ChEBI" id="CHEBI:77091"/>
    </reaction>
    <physiologicalReaction direction="left-to-right" evidence="1">
        <dbReference type="Rhea" id="RHEA:43293"/>
    </physiologicalReaction>
</comment>
<comment type="catalytic activity">
    <molecule>Isoform 1</molecule>
    <reaction evidence="1">
        <text>1-octadecanoyl-2-(9Z,12Z-octadecadienoyl)-sn-glycero-3-phosphate + H2O = 1-octadecanoyl-2-(9Z,12Z)-octadecadienoyl-sn-glycerol + phosphate</text>
        <dbReference type="Rhea" id="RHEA:43288"/>
        <dbReference type="ChEBI" id="CHEBI:15377"/>
        <dbReference type="ChEBI" id="CHEBI:43474"/>
        <dbReference type="ChEBI" id="CHEBI:77097"/>
        <dbReference type="ChEBI" id="CHEBI:77098"/>
    </reaction>
    <physiologicalReaction direction="left-to-right" evidence="1">
        <dbReference type="Rhea" id="RHEA:43289"/>
    </physiologicalReaction>
</comment>
<comment type="catalytic activity">
    <molecule>Isoform 2</molecule>
    <reaction evidence="1">
        <text>1-octadecanoyl-2-(9Z,12Z-octadecadienoyl)-sn-glycero-3-phosphate + H2O = 1-octadecanoyl-2-(9Z,12Z)-octadecadienoyl-sn-glycerol + phosphate</text>
        <dbReference type="Rhea" id="RHEA:43288"/>
        <dbReference type="ChEBI" id="CHEBI:15377"/>
        <dbReference type="ChEBI" id="CHEBI:43474"/>
        <dbReference type="ChEBI" id="CHEBI:77097"/>
        <dbReference type="ChEBI" id="CHEBI:77098"/>
    </reaction>
    <physiologicalReaction direction="left-to-right" evidence="1">
        <dbReference type="Rhea" id="RHEA:43289"/>
    </physiologicalReaction>
</comment>
<comment type="catalytic activity">
    <molecule>Isoform 1</molecule>
    <reaction evidence="1">
        <text>1-octadecanoyl-2-(9Z-octadecenoyl)-sn-glycero-3-phosphate + H2O = 1-octadecanoyl-2-(9Z-octadecenoyl)-sn-glycerol + phosphate</text>
        <dbReference type="Rhea" id="RHEA:43284"/>
        <dbReference type="ChEBI" id="CHEBI:15377"/>
        <dbReference type="ChEBI" id="CHEBI:43474"/>
        <dbReference type="ChEBI" id="CHEBI:74560"/>
        <dbReference type="ChEBI" id="CHEBI:75468"/>
    </reaction>
    <physiologicalReaction direction="left-to-right" evidence="1">
        <dbReference type="Rhea" id="RHEA:43285"/>
    </physiologicalReaction>
</comment>
<comment type="catalytic activity">
    <molecule>Isoform 2</molecule>
    <reaction evidence="1">
        <text>1-octadecanoyl-2-(9Z-octadecenoyl)-sn-glycero-3-phosphate + H2O = 1-octadecanoyl-2-(9Z-octadecenoyl)-sn-glycerol + phosphate</text>
        <dbReference type="Rhea" id="RHEA:43284"/>
        <dbReference type="ChEBI" id="CHEBI:15377"/>
        <dbReference type="ChEBI" id="CHEBI:43474"/>
        <dbReference type="ChEBI" id="CHEBI:74560"/>
        <dbReference type="ChEBI" id="CHEBI:75468"/>
    </reaction>
    <physiologicalReaction direction="left-to-right" evidence="1">
        <dbReference type="Rhea" id="RHEA:43285"/>
    </physiologicalReaction>
</comment>
<comment type="catalytic activity">
    <molecule>Isoform 1</molecule>
    <reaction evidence="1">
        <text>1-hexadecanoyl-2-(4Z,7Z,10Z,13Z,16Z,19Z-docosahexaenoyl)-sn-glycero-3-phosphate + H2O = 1-hexadecanoyl-2-(4Z,7Z,10Z,13Z,16Z,19Z-docosahexaenoyl)-sn-glycerol + phosphate</text>
        <dbReference type="Rhea" id="RHEA:43280"/>
        <dbReference type="ChEBI" id="CHEBI:15377"/>
        <dbReference type="ChEBI" id="CHEBI:43474"/>
        <dbReference type="ChEBI" id="CHEBI:82928"/>
        <dbReference type="ChEBI" id="CHEBI:82949"/>
    </reaction>
    <physiologicalReaction direction="left-to-right" evidence="1">
        <dbReference type="Rhea" id="RHEA:43281"/>
    </physiologicalReaction>
</comment>
<comment type="catalytic activity">
    <molecule>Isoform 2</molecule>
    <reaction evidence="1">
        <text>1-hexadecanoyl-2-(4Z,7Z,10Z,13Z,16Z,19Z-docosahexaenoyl)-sn-glycero-3-phosphate + H2O = 1-hexadecanoyl-2-(4Z,7Z,10Z,13Z,16Z,19Z-docosahexaenoyl)-sn-glycerol + phosphate</text>
        <dbReference type="Rhea" id="RHEA:43280"/>
        <dbReference type="ChEBI" id="CHEBI:15377"/>
        <dbReference type="ChEBI" id="CHEBI:43474"/>
        <dbReference type="ChEBI" id="CHEBI:82928"/>
        <dbReference type="ChEBI" id="CHEBI:82949"/>
    </reaction>
    <physiologicalReaction direction="left-to-right" evidence="1">
        <dbReference type="Rhea" id="RHEA:43281"/>
    </physiologicalReaction>
</comment>
<comment type="catalytic activity">
    <molecule>Isoform 2</molecule>
    <reaction evidence="1">
        <text>1,2-dioctadecanoyl-sn-glycero-3-phosphate + H2O = 1,2-dioctadecanoyl-sn-glycerol + phosphate</text>
        <dbReference type="Rhea" id="RHEA:33335"/>
        <dbReference type="ChEBI" id="CHEBI:15377"/>
        <dbReference type="ChEBI" id="CHEBI:41847"/>
        <dbReference type="ChEBI" id="CHEBI:43474"/>
        <dbReference type="ChEBI" id="CHEBI:82921"/>
    </reaction>
    <physiologicalReaction direction="left-to-right" evidence="1">
        <dbReference type="Rhea" id="RHEA:33336"/>
    </physiologicalReaction>
</comment>
<comment type="catalytic activity">
    <molecule>Isoform 1</molecule>
    <reaction evidence="1">
        <text>1-hexadecanoyl-2-(5Z,8Z,11Z,14Z-eicosatetraenoyl)-sn-glycero-3-phosphate + H2O = 1-hexadecanoyl-2-(5Z,8Z,11Z,14Z-eicosatetraenoyl)-sn-glycerol + phosphate</text>
        <dbReference type="Rhea" id="RHEA:43260"/>
        <dbReference type="ChEBI" id="CHEBI:15377"/>
        <dbReference type="ChEBI" id="CHEBI:43474"/>
        <dbReference type="ChEBI" id="CHEBI:72864"/>
        <dbReference type="ChEBI" id="CHEBI:77096"/>
    </reaction>
    <physiologicalReaction direction="left-to-right" evidence="1">
        <dbReference type="Rhea" id="RHEA:43261"/>
    </physiologicalReaction>
</comment>
<comment type="catalytic activity">
    <molecule>Isoform 2</molecule>
    <reaction evidence="1">
        <text>1-hexadecanoyl-2-(5Z,8Z,11Z,14Z-eicosatetraenoyl)-sn-glycero-3-phosphate + H2O = 1-hexadecanoyl-2-(5Z,8Z,11Z,14Z-eicosatetraenoyl)-sn-glycerol + phosphate</text>
        <dbReference type="Rhea" id="RHEA:43260"/>
        <dbReference type="ChEBI" id="CHEBI:15377"/>
        <dbReference type="ChEBI" id="CHEBI:43474"/>
        <dbReference type="ChEBI" id="CHEBI:72864"/>
        <dbReference type="ChEBI" id="CHEBI:77096"/>
    </reaction>
    <physiologicalReaction direction="left-to-right" evidence="1">
        <dbReference type="Rhea" id="RHEA:43261"/>
    </physiologicalReaction>
</comment>
<comment type="catalytic activity">
    <molecule>Isoform 1</molecule>
    <reaction evidence="1">
        <text>1-hexadecanoyl-2-(9Z,12Z-octadecadienoyl)-sn-glycero-3-phosphate + H2O = 1-hexadecanoyl-2-(9Z,12Z-octadecadienoyl)-sn-glycerol + phosphate</text>
        <dbReference type="Rhea" id="RHEA:43256"/>
        <dbReference type="ChEBI" id="CHEBI:15377"/>
        <dbReference type="ChEBI" id="CHEBI:43474"/>
        <dbReference type="ChEBI" id="CHEBI:72860"/>
        <dbReference type="ChEBI" id="CHEBI:82927"/>
    </reaction>
    <physiologicalReaction direction="left-to-right" evidence="1">
        <dbReference type="Rhea" id="RHEA:43257"/>
    </physiologicalReaction>
</comment>
<comment type="catalytic activity">
    <molecule>Isoform 2</molecule>
    <reaction evidence="1">
        <text>1-hexadecanoyl-2-(9Z,12Z-octadecadienoyl)-sn-glycero-3-phosphate + H2O = 1-hexadecanoyl-2-(9Z,12Z-octadecadienoyl)-sn-glycerol + phosphate</text>
        <dbReference type="Rhea" id="RHEA:43256"/>
        <dbReference type="ChEBI" id="CHEBI:15377"/>
        <dbReference type="ChEBI" id="CHEBI:43474"/>
        <dbReference type="ChEBI" id="CHEBI:72860"/>
        <dbReference type="ChEBI" id="CHEBI:82927"/>
    </reaction>
    <physiologicalReaction direction="left-to-right" evidence="1">
        <dbReference type="Rhea" id="RHEA:43257"/>
    </physiologicalReaction>
</comment>
<comment type="catalytic activity">
    <molecule>Isoform 1</molecule>
    <reaction evidence="1">
        <text>1-hexadecanoyl-2-(9Z-octadecenoyl)-sn-glycero-3-phosphate + H2O = 1-hexadecanoyl-2-(9Z-octadecenoyl)-sn-glycerol + phosphate</text>
        <dbReference type="Rhea" id="RHEA:41255"/>
        <dbReference type="ChEBI" id="CHEBI:15377"/>
        <dbReference type="ChEBI" id="CHEBI:43474"/>
        <dbReference type="ChEBI" id="CHEBI:64839"/>
        <dbReference type="ChEBI" id="CHEBI:75466"/>
    </reaction>
    <physiologicalReaction direction="left-to-right" evidence="1">
        <dbReference type="Rhea" id="RHEA:41256"/>
    </physiologicalReaction>
</comment>
<comment type="catalytic activity">
    <molecule>Isoform 2</molecule>
    <reaction evidence="1">
        <text>1-hexadecanoyl-2-(9Z-octadecenoyl)-sn-glycero-3-phosphate + H2O = 1-hexadecanoyl-2-(9Z-octadecenoyl)-sn-glycerol + phosphate</text>
        <dbReference type="Rhea" id="RHEA:41255"/>
        <dbReference type="ChEBI" id="CHEBI:15377"/>
        <dbReference type="ChEBI" id="CHEBI:43474"/>
        <dbReference type="ChEBI" id="CHEBI:64839"/>
        <dbReference type="ChEBI" id="CHEBI:75466"/>
    </reaction>
    <physiologicalReaction direction="left-to-right" evidence="1">
        <dbReference type="Rhea" id="RHEA:41256"/>
    </physiologicalReaction>
</comment>
<comment type="catalytic activity">
    <molecule>Isoform 1</molecule>
    <reaction evidence="1">
        <text>1,2-di-(4Z,7Z,10Z,13Z,16Z,19Z-docosahexaenoyl)-sn-glycero-3-phosphate + H2O = 1,2-di-(4Z,7Z,10Z,13Z,16Z,19Z-docosahexaenoyl)-sn-glycerol + phosphate</text>
        <dbReference type="Rhea" id="RHEA:43252"/>
        <dbReference type="ChEBI" id="CHEBI:15377"/>
        <dbReference type="ChEBI" id="CHEBI:43474"/>
        <dbReference type="ChEBI" id="CHEBI:82924"/>
        <dbReference type="ChEBI" id="CHEBI:82925"/>
    </reaction>
    <physiologicalReaction direction="left-to-right" evidence="1">
        <dbReference type="Rhea" id="RHEA:43253"/>
    </physiologicalReaction>
</comment>
<comment type="catalytic activity">
    <molecule>Isoform 2</molecule>
    <reaction evidence="1">
        <text>1,2-di-(4Z,7Z,10Z,13Z,16Z,19Z-docosahexaenoyl)-sn-glycero-3-phosphate + H2O = 1,2-di-(4Z,7Z,10Z,13Z,16Z,19Z-docosahexaenoyl)-sn-glycerol + phosphate</text>
        <dbReference type="Rhea" id="RHEA:43252"/>
        <dbReference type="ChEBI" id="CHEBI:15377"/>
        <dbReference type="ChEBI" id="CHEBI:43474"/>
        <dbReference type="ChEBI" id="CHEBI:82924"/>
        <dbReference type="ChEBI" id="CHEBI:82925"/>
    </reaction>
    <physiologicalReaction direction="left-to-right" evidence="1">
        <dbReference type="Rhea" id="RHEA:43253"/>
    </physiologicalReaction>
</comment>
<comment type="catalytic activity">
    <molecule>Isoform 1</molecule>
    <reaction evidence="1">
        <text>1,2-di-(5Z,8Z,11Z,14Z)-eicosatetraenoyl-sn-glycero-3-phosphate + H2O = 1,2-di-(5Z,8Z,11Z,14Z)-eicosatetraenoyl-sn-glycerol + phosphate</text>
        <dbReference type="Rhea" id="RHEA:43248"/>
        <dbReference type="ChEBI" id="CHEBI:15377"/>
        <dbReference type="ChEBI" id="CHEBI:43474"/>
        <dbReference type="ChEBI" id="CHEBI:77125"/>
        <dbReference type="ChEBI" id="CHEBI:77126"/>
    </reaction>
    <physiologicalReaction direction="left-to-right" evidence="1">
        <dbReference type="Rhea" id="RHEA:43249"/>
    </physiologicalReaction>
</comment>
<comment type="catalytic activity">
    <molecule>Isoform 2</molecule>
    <reaction evidence="1">
        <text>1,2-di-(5Z,8Z,11Z,14Z)-eicosatetraenoyl-sn-glycero-3-phosphate + H2O = 1,2-di-(5Z,8Z,11Z,14Z)-eicosatetraenoyl-sn-glycerol + phosphate</text>
        <dbReference type="Rhea" id="RHEA:43248"/>
        <dbReference type="ChEBI" id="CHEBI:15377"/>
        <dbReference type="ChEBI" id="CHEBI:43474"/>
        <dbReference type="ChEBI" id="CHEBI:77125"/>
        <dbReference type="ChEBI" id="CHEBI:77126"/>
    </reaction>
    <physiologicalReaction direction="left-to-right" evidence="1">
        <dbReference type="Rhea" id="RHEA:43249"/>
    </physiologicalReaction>
</comment>
<comment type="catalytic activity">
    <molecule>Isoform 1</molecule>
    <reaction evidence="1">
        <text>1,2-di-(9Z,12Z-octadecadienoyl)-sn-glycero-3-phosphate + H2O = 1,2-di-(9Z,12Z-octadecadienoyl)-sn-glycerol + phosphate</text>
        <dbReference type="Rhea" id="RHEA:43240"/>
        <dbReference type="ChEBI" id="CHEBI:15377"/>
        <dbReference type="ChEBI" id="CHEBI:43474"/>
        <dbReference type="ChEBI" id="CHEBI:77127"/>
        <dbReference type="ChEBI" id="CHEBI:77128"/>
    </reaction>
    <physiologicalReaction direction="left-to-right" evidence="1">
        <dbReference type="Rhea" id="RHEA:43241"/>
    </physiologicalReaction>
</comment>
<comment type="catalytic activity">
    <molecule>Isoform 2</molecule>
    <reaction evidence="1">
        <text>1,2-di-(9Z,12Z-octadecadienoyl)-sn-glycero-3-phosphate + H2O = 1,2-di-(9Z,12Z-octadecadienoyl)-sn-glycerol + phosphate</text>
        <dbReference type="Rhea" id="RHEA:43240"/>
        <dbReference type="ChEBI" id="CHEBI:15377"/>
        <dbReference type="ChEBI" id="CHEBI:43474"/>
        <dbReference type="ChEBI" id="CHEBI:77127"/>
        <dbReference type="ChEBI" id="CHEBI:77128"/>
    </reaction>
    <physiologicalReaction direction="left-to-right" evidence="1">
        <dbReference type="Rhea" id="RHEA:43241"/>
    </physiologicalReaction>
</comment>
<comment type="catalytic activity">
    <molecule>Isoform 1</molecule>
    <reaction evidence="1">
        <text>1,2-di-(9Z-octadecenoyl)-sn-glycero-3-phosphate + H2O = 1,2-di-(9Z-octadecenoyl)-sn-glycerol + phosphate</text>
        <dbReference type="Rhea" id="RHEA:43244"/>
        <dbReference type="ChEBI" id="CHEBI:15377"/>
        <dbReference type="ChEBI" id="CHEBI:43474"/>
        <dbReference type="ChEBI" id="CHEBI:52333"/>
        <dbReference type="ChEBI" id="CHEBI:74546"/>
    </reaction>
    <physiologicalReaction direction="left-to-right" evidence="1">
        <dbReference type="Rhea" id="RHEA:43245"/>
    </physiologicalReaction>
</comment>
<comment type="catalytic activity">
    <molecule>Isoform 2</molecule>
    <reaction evidence="1">
        <text>1,2-di-(9Z-octadecenoyl)-sn-glycero-3-phosphate + H2O = 1,2-di-(9Z-octadecenoyl)-sn-glycerol + phosphate</text>
        <dbReference type="Rhea" id="RHEA:43244"/>
        <dbReference type="ChEBI" id="CHEBI:15377"/>
        <dbReference type="ChEBI" id="CHEBI:43474"/>
        <dbReference type="ChEBI" id="CHEBI:52333"/>
        <dbReference type="ChEBI" id="CHEBI:74546"/>
    </reaction>
    <physiologicalReaction direction="left-to-right" evidence="1">
        <dbReference type="Rhea" id="RHEA:43245"/>
    </physiologicalReaction>
</comment>
<comment type="catalytic activity">
    <molecule>Isoform 2</molecule>
    <reaction evidence="1">
        <text>1,2-dihexadecanoyl-sn-glycero-3-phosphate + H2O = 1,2-dihexadecanoyl-sn-glycerol + phosphate</text>
        <dbReference type="Rhea" id="RHEA:43236"/>
        <dbReference type="ChEBI" id="CHEBI:15377"/>
        <dbReference type="ChEBI" id="CHEBI:43474"/>
        <dbReference type="ChEBI" id="CHEBI:72859"/>
        <dbReference type="ChEBI" id="CHEBI:82929"/>
    </reaction>
    <physiologicalReaction direction="left-to-right" evidence="1">
        <dbReference type="Rhea" id="RHEA:43237"/>
    </physiologicalReaction>
</comment>
<comment type="cofactor">
    <cofactor evidence="8">
        <name>Mg(2+)</name>
        <dbReference type="ChEBI" id="CHEBI:18420"/>
    </cofactor>
</comment>
<comment type="activity regulation">
    <text evidence="8">Inhibited by N-ethylmaleimide treatment.</text>
</comment>
<comment type="subunit">
    <text evidence="6 10">Interacts (via LXXIL motif) with PPARA (PubMed:16950137). Interacts with PPARGC1A (PubMed:16950137). Interaction with PPARA and PPARGC1A leads to the formation of a complex that modulates gene transcription (PubMed:16950137). Interacts with MEF2C (PubMed:19753306).</text>
</comment>
<comment type="subcellular location">
    <molecule>Isoform 1</molecule>
    <subcellularLocation>
        <location evidence="11">Mitochondrion outer membrane</location>
    </subcellularLocation>
    <subcellularLocation>
        <location evidence="5 11">Cytoplasm</location>
    </subcellularLocation>
    <subcellularLocation>
        <location evidence="11">Nucleus membrane</location>
    </subcellularLocation>
    <text evidence="5 11">Recruited at the mitochondrion outer membrane following phosphatidic acid formation mediated by PLD6. In neuronals cells, isoform 1 is exclusively cytoplasmic (PubMed:21397848). In 3T3-L1 pre-adipocytes, it primarily located in the cytoplasm (PubMed:16049017).</text>
</comment>
<comment type="subcellular location">
    <molecule>Isoform 2</molecule>
    <subcellularLocation>
        <location evidence="4 5 7 10 12">Nucleus</location>
    </subcellularLocation>
    <subcellularLocation>
        <location evidence="10">Cytoplasm</location>
    </subcellularLocation>
    <subcellularLocation>
        <location evidence="1">Endoplasmic reticulum membrane</location>
    </subcellularLocation>
    <text evidence="1 5 10 12">Nuclear localization requires both CNEP1R1 and CTDNEP1 (PubMed:22134922). In neuronals cells, localized in both the cytoplasm and the nucleus (PubMed:19753306). In 3T3-L1 pre-adipocytes, it is predominantly nuclear (PubMed:16049017). Translocates from the cytosol to the endoplasmic reticulum following acetylation by KAT5 (By similarity).</text>
</comment>
<comment type="alternative products">
    <event type="alternative splicing"/>
    <isoform>
        <id>Q91ZP3-1</id>
        <name>1</name>
        <name evidence="14">Lipin-beta</name>
        <sequence type="displayed"/>
    </isoform>
    <isoform>
        <id>Q91ZP3-2</id>
        <name>2</name>
        <name evidence="14">Lipin-alpha</name>
        <sequence type="described" ref="VSP_003134"/>
    </isoform>
</comment>
<comment type="tissue specificity">
    <text evidence="5 8 10 12">Specifically expressed in skeletal muscle. Also expressed prominently in adipose tissue, and testis. Lower expression also detected in kidney, lung, brain and liver.</text>
</comment>
<comment type="tissue specificity">
    <molecule>Isoform 1</molecule>
    <text evidence="5">Predominant isoform in the liver.</text>
</comment>
<comment type="tissue specificity">
    <molecule>Isoform 2</molecule>
    <text evidence="5">Predominant isoform in the brain.</text>
</comment>
<comment type="induction">
    <text evidence="6">By fasting, glucocorticoids and diabetes in the liver in a PPARGC1A-dependent manner. Up-regulated during differentiation of 3T3-L1 pre-adipocytes.</text>
</comment>
<comment type="domain">
    <text evidence="9">Contains one Asp-Xaa-Asp-Xaa-Thr (DXDXT) motif, a catalytic motif essential for phosphatidate phosphatase activity.</text>
</comment>
<comment type="domain">
    <text evidence="6">Contains one Leu-Xaa-Xaa-Ile-Leu (LXXIL), a transcriptional binding motif, which mediates interaction with PPARA.</text>
</comment>
<comment type="PTM">
    <text evidence="7">Phosphorylated at multiple sites in response to insulin. Phosphorylation is controlled by the mTOR signaling pathway. Phosphorylation is decreased by epinephrine. Phosphorylation may not directly affect the catalytic activity but may regulate the localization. Dephosphorylated by the CTDNEP1-CNEP1R1 complex.</text>
</comment>
<comment type="PTM">
    <text evidence="1 7">Phosphorylated at multiple sites by mTOR in response to insulin, leading to its inactivation (PubMed:17105729). Phosphorylation does not affect the catalytic activity but regulates the localization (PubMed:17105729). Phosphorylation is decreased by epinephrine (PubMed:17105729). Dephosphorylated by the CTDNEP1-CNEP1R1 complex (PubMed:17105729). Dephosphorylation following mTOR inhibition promotes its activity (By similarity).</text>
</comment>
<comment type="PTM">
    <text evidence="10">Sumoylation is important in brain and is marginal in other tissues. Sumoylation facilitates nuclear localization of isoform 2 in neuronals cells and its transcriptional coactivator activity.</text>
</comment>
<comment type="PTM">
    <text evidence="1">Acetylation at Lys-459 and Lys-629 by KAT5 in response to fatty acids promotes translocation to the endoplasmic reticulum and synthesis of diacylglycerol.</text>
</comment>
<comment type="disease">
    <text evidence="4">Defects in Lpin1 are the cause of the fatty liver dystrophy phenotype (fld). Fld mutant mice are characterized by neonatal fatty liver and hypertriglyceridemia that resolve at weaning, and neuropathy affecting peripheral nerve in adulthood. Adipose tissue deficiency, glucose intolerance and increased susceptibility to atherosclerosis are associated with this mutation too. Two independent mutant alleles are characterized in this phenotype, fld and fld2j.</text>
</comment>
<comment type="similarity">
    <text evidence="16">Belongs to the lipin family.</text>
</comment>
<accession>Q91ZP3</accession>
<accession>Q9CQI2</accession>
<accession>Q9JLG6</accession>
<name>LPIN1_MOUSE</name>
<sequence>MNYVGQLAGQVFVTVKELYKGLNPATLSGCIDIIVIRQPNGSLQCSPFHVRFGKMGVLRSREKVVDIEINGESVDLHMKLGDNGEAFFVQETDNDQEIIPMYLATSPILSEGAARMESQLKRNSVDRIRCLDPTTAAQGLPPSDTPSTGSLGKKRRKRRRKAQLDNLKRDDNVNSSEDEDMFPIEMSSDEDTAPMDGSRTLPNDVPPFQDDIPKENFPSISTHPQSASYPSSDREWSPSPSSLVDCQRTPPHLAEGVLSSSCPLQSCHFHASESPSGSRPSTPKSDSELVSKSADRLTPKNNLEMLWLWGELPQAAKSSSPHKMKESSPLGSRKTPDKMNFQAIHSESSDTFSDQSPTMARGLLIHQSKAQTEMQFVNEEDLESLGAAAPPSPVAEELKAPYPNTAQSSSKTDSPSRKKDKRSRHLGADGVYLDDLTDMDPEVAALYFPKNGDPGGLPKQASDNGARSANQSPQSVGGSGIDSGVESTSDSLRDLPSIAISLCGGLSDHREITKDAFLEQAVSYQQFADNPAIIDDPNLVVKVGNKYYNWTTAAPLLLAMQAFQKPLPKATVESIMRDKMPKKGGRWWFSWRGRNATIKEESKPEQCLTGKGHNTGEQPAQLGLATRIKHESSSSDEEHAAAKPSGSSHLSLLSNVSYKKTLRLTSEQLKSLKLKNGPNDVVFSVTTQYQGTCRCEGTIYLWNWDDKVIISDIDGTITRSDTLGHILPTLGKDWTHQGIAKLYHKVSQNGYKFLYCSARAIGMADMTRGYLHWVNERGTVLPQGPLLLSPSSLFSALHREVIEKKPEKFKVQCLTDIKNLFFPNTEPFYAAFGNRPADVYSYKQVGVSLNRIFTVNPKGELVQEHAKTNISSYVRLCEVVDHVFPLLKRSHSCDFPCSDTFSNFTFWREPLPPFENQDMHSASA</sequence>
<organism>
    <name type="scientific">Mus musculus</name>
    <name type="common">Mouse</name>
    <dbReference type="NCBI Taxonomy" id="10090"/>
    <lineage>
        <taxon>Eukaryota</taxon>
        <taxon>Metazoa</taxon>
        <taxon>Chordata</taxon>
        <taxon>Craniata</taxon>
        <taxon>Vertebrata</taxon>
        <taxon>Euteleostomi</taxon>
        <taxon>Mammalia</taxon>
        <taxon>Eutheria</taxon>
        <taxon>Euarchontoglires</taxon>
        <taxon>Glires</taxon>
        <taxon>Rodentia</taxon>
        <taxon>Myomorpha</taxon>
        <taxon>Muroidea</taxon>
        <taxon>Muridae</taxon>
        <taxon>Murinae</taxon>
        <taxon>Mus</taxon>
        <taxon>Mus</taxon>
    </lineage>
</organism>
<gene>
    <name type="primary">Lpin1</name>
    <name evidence="13" type="synonym">Flde</name>
</gene>
<proteinExistence type="evidence at protein level"/>
<keyword id="KW-0002">3D-structure</keyword>
<keyword id="KW-0007">Acetylation</keyword>
<keyword id="KW-0025">Alternative splicing</keyword>
<keyword id="KW-0963">Cytoplasm</keyword>
<keyword id="KW-0903">Direct protein sequencing</keyword>
<keyword id="KW-0225">Disease variant</keyword>
<keyword id="KW-0256">Endoplasmic reticulum</keyword>
<keyword id="KW-0378">Hydrolase</keyword>
<keyword id="KW-1017">Isopeptide bond</keyword>
<keyword id="KW-0472">Membrane</keyword>
<keyword id="KW-0496">Mitochondrion</keyword>
<keyword id="KW-1000">Mitochondrion outer membrane</keyword>
<keyword id="KW-0539">Nucleus</keyword>
<keyword id="KW-0597">Phosphoprotein</keyword>
<keyword id="KW-1185">Reference proteome</keyword>
<keyword id="KW-0804">Transcription</keyword>
<keyword id="KW-0805">Transcription regulation</keyword>
<keyword id="KW-0832">Ubl conjugation</keyword>
<evidence type="ECO:0000250" key="1">
    <source>
        <dbReference type="UniProtKB" id="Q14693"/>
    </source>
</evidence>
<evidence type="ECO:0000255" key="2"/>
<evidence type="ECO:0000256" key="3">
    <source>
        <dbReference type="SAM" id="MobiDB-lite"/>
    </source>
</evidence>
<evidence type="ECO:0000269" key="4">
    <source>
    </source>
</evidence>
<evidence type="ECO:0000269" key="5">
    <source>
    </source>
</evidence>
<evidence type="ECO:0000269" key="6">
    <source>
    </source>
</evidence>
<evidence type="ECO:0000269" key="7">
    <source>
    </source>
</evidence>
<evidence type="ECO:0000269" key="8">
    <source>
    </source>
</evidence>
<evidence type="ECO:0000269" key="9">
    <source>
    </source>
</evidence>
<evidence type="ECO:0000269" key="10">
    <source>
    </source>
</evidence>
<evidence type="ECO:0000269" key="11">
    <source>
    </source>
</evidence>
<evidence type="ECO:0000269" key="12">
    <source>
    </source>
</evidence>
<evidence type="ECO:0000303" key="13">
    <source>
    </source>
</evidence>
<evidence type="ECO:0000303" key="14">
    <source>
    </source>
</evidence>
<evidence type="ECO:0000303" key="15">
    <source>
    </source>
</evidence>
<evidence type="ECO:0000305" key="16"/>
<evidence type="ECO:0000305" key="17">
    <source>
    </source>
</evidence>
<evidence type="ECO:0000305" key="18">
    <source>
    </source>
</evidence>
<evidence type="ECO:0000305" key="19">
    <source>
    </source>
</evidence>
<evidence type="ECO:0007744" key="20">
    <source>
    </source>
</evidence>
<evidence type="ECO:0007829" key="21">
    <source>
        <dbReference type="PDB" id="7KIH"/>
    </source>
</evidence>
<reference key="1">
    <citation type="journal article" date="2002" name="Proc. Natl. Acad. Sci. U.S.A.">
        <title>Insulin-stimulated phosphorylation of lipin mediated by the mammalian target of rapamycin.</title>
        <authorList>
            <person name="Huffman T.A."/>
            <person name="Mothe-Satney I."/>
            <person name="Lawrence J.C. Jr."/>
        </authorList>
    </citation>
    <scope>NUCLEOTIDE SEQUENCE [MRNA] (ISOFORM 1)</scope>
    <scope>PROTEIN SEQUENCE OF 38-50; 301-317; 362-369; 425-459; 570-577; 676-693; 708-732; 769-777; 811-843; 868-888 AND 890-908</scope>
    <source>
        <strain>BALB/cJ</strain>
        <tissue>Liver</tissue>
    </source>
</reference>
<reference key="2">
    <citation type="journal article" date="2001" name="Nat. Genet.">
        <title>Lipodystrophy in the fld mouse results from mutation of a new gene encoding a nuclear protein, lipin.</title>
        <authorList>
            <person name="Peterfy M."/>
            <person name="Phan J."/>
            <person name="Xu P."/>
            <person name="Reue K."/>
        </authorList>
    </citation>
    <scope>NUCLEOTIDE SEQUENCE [MRNA] (ISOFORM 2)</scope>
    <scope>SUBCELLULAR LOCATION</scope>
    <scope>VARIANT FLD2J ARG-84</scope>
    <source>
        <strain>BALB/cJ</strain>
    </source>
</reference>
<reference key="3">
    <citation type="journal article" date="2005" name="Science">
        <title>The transcriptional landscape of the mammalian genome.</title>
        <authorList>
            <person name="Carninci P."/>
            <person name="Kasukawa T."/>
            <person name="Katayama S."/>
            <person name="Gough J."/>
            <person name="Frith M.C."/>
            <person name="Maeda N."/>
            <person name="Oyama R."/>
            <person name="Ravasi T."/>
            <person name="Lenhard B."/>
            <person name="Wells C."/>
            <person name="Kodzius R."/>
            <person name="Shimokawa K."/>
            <person name="Bajic V.B."/>
            <person name="Brenner S.E."/>
            <person name="Batalov S."/>
            <person name="Forrest A.R."/>
            <person name="Zavolan M."/>
            <person name="Davis M.J."/>
            <person name="Wilming L.G."/>
            <person name="Aidinis V."/>
            <person name="Allen J.E."/>
            <person name="Ambesi-Impiombato A."/>
            <person name="Apweiler R."/>
            <person name="Aturaliya R.N."/>
            <person name="Bailey T.L."/>
            <person name="Bansal M."/>
            <person name="Baxter L."/>
            <person name="Beisel K.W."/>
            <person name="Bersano T."/>
            <person name="Bono H."/>
            <person name="Chalk A.M."/>
            <person name="Chiu K.P."/>
            <person name="Choudhary V."/>
            <person name="Christoffels A."/>
            <person name="Clutterbuck D.R."/>
            <person name="Crowe M.L."/>
            <person name="Dalla E."/>
            <person name="Dalrymple B.P."/>
            <person name="de Bono B."/>
            <person name="Della Gatta G."/>
            <person name="di Bernardo D."/>
            <person name="Down T."/>
            <person name="Engstrom P."/>
            <person name="Fagiolini M."/>
            <person name="Faulkner G."/>
            <person name="Fletcher C.F."/>
            <person name="Fukushima T."/>
            <person name="Furuno M."/>
            <person name="Futaki S."/>
            <person name="Gariboldi M."/>
            <person name="Georgii-Hemming P."/>
            <person name="Gingeras T.R."/>
            <person name="Gojobori T."/>
            <person name="Green R.E."/>
            <person name="Gustincich S."/>
            <person name="Harbers M."/>
            <person name="Hayashi Y."/>
            <person name="Hensch T.K."/>
            <person name="Hirokawa N."/>
            <person name="Hill D."/>
            <person name="Huminiecki L."/>
            <person name="Iacono M."/>
            <person name="Ikeo K."/>
            <person name="Iwama A."/>
            <person name="Ishikawa T."/>
            <person name="Jakt M."/>
            <person name="Kanapin A."/>
            <person name="Katoh M."/>
            <person name="Kawasawa Y."/>
            <person name="Kelso J."/>
            <person name="Kitamura H."/>
            <person name="Kitano H."/>
            <person name="Kollias G."/>
            <person name="Krishnan S.P."/>
            <person name="Kruger A."/>
            <person name="Kummerfeld S.K."/>
            <person name="Kurochkin I.V."/>
            <person name="Lareau L.F."/>
            <person name="Lazarevic D."/>
            <person name="Lipovich L."/>
            <person name="Liu J."/>
            <person name="Liuni S."/>
            <person name="McWilliam S."/>
            <person name="Madan Babu M."/>
            <person name="Madera M."/>
            <person name="Marchionni L."/>
            <person name="Matsuda H."/>
            <person name="Matsuzawa S."/>
            <person name="Miki H."/>
            <person name="Mignone F."/>
            <person name="Miyake S."/>
            <person name="Morris K."/>
            <person name="Mottagui-Tabar S."/>
            <person name="Mulder N."/>
            <person name="Nakano N."/>
            <person name="Nakauchi H."/>
            <person name="Ng P."/>
            <person name="Nilsson R."/>
            <person name="Nishiguchi S."/>
            <person name="Nishikawa S."/>
            <person name="Nori F."/>
            <person name="Ohara O."/>
            <person name="Okazaki Y."/>
            <person name="Orlando V."/>
            <person name="Pang K.C."/>
            <person name="Pavan W.J."/>
            <person name="Pavesi G."/>
            <person name="Pesole G."/>
            <person name="Petrovsky N."/>
            <person name="Piazza S."/>
            <person name="Reed J."/>
            <person name="Reid J.F."/>
            <person name="Ring B.Z."/>
            <person name="Ringwald M."/>
            <person name="Rost B."/>
            <person name="Ruan Y."/>
            <person name="Salzberg S.L."/>
            <person name="Sandelin A."/>
            <person name="Schneider C."/>
            <person name="Schoenbach C."/>
            <person name="Sekiguchi K."/>
            <person name="Semple C.A."/>
            <person name="Seno S."/>
            <person name="Sessa L."/>
            <person name="Sheng Y."/>
            <person name="Shibata Y."/>
            <person name="Shimada H."/>
            <person name="Shimada K."/>
            <person name="Silva D."/>
            <person name="Sinclair B."/>
            <person name="Sperling S."/>
            <person name="Stupka E."/>
            <person name="Sugiura K."/>
            <person name="Sultana R."/>
            <person name="Takenaka Y."/>
            <person name="Taki K."/>
            <person name="Tammoja K."/>
            <person name="Tan S.L."/>
            <person name="Tang S."/>
            <person name="Taylor M.S."/>
            <person name="Tegner J."/>
            <person name="Teichmann S.A."/>
            <person name="Ueda H.R."/>
            <person name="van Nimwegen E."/>
            <person name="Verardo R."/>
            <person name="Wei C.L."/>
            <person name="Yagi K."/>
            <person name="Yamanishi H."/>
            <person name="Zabarovsky E."/>
            <person name="Zhu S."/>
            <person name="Zimmer A."/>
            <person name="Hide W."/>
            <person name="Bult C."/>
            <person name="Grimmond S.M."/>
            <person name="Teasdale R.D."/>
            <person name="Liu E.T."/>
            <person name="Brusic V."/>
            <person name="Quackenbush J."/>
            <person name="Wahlestedt C."/>
            <person name="Mattick J.S."/>
            <person name="Hume D.A."/>
            <person name="Kai C."/>
            <person name="Sasaki D."/>
            <person name="Tomaru Y."/>
            <person name="Fukuda S."/>
            <person name="Kanamori-Katayama M."/>
            <person name="Suzuki M."/>
            <person name="Aoki J."/>
            <person name="Arakawa T."/>
            <person name="Iida J."/>
            <person name="Imamura K."/>
            <person name="Itoh M."/>
            <person name="Kato T."/>
            <person name="Kawaji H."/>
            <person name="Kawagashira N."/>
            <person name="Kawashima T."/>
            <person name="Kojima M."/>
            <person name="Kondo S."/>
            <person name="Konno H."/>
            <person name="Nakano K."/>
            <person name="Ninomiya N."/>
            <person name="Nishio T."/>
            <person name="Okada M."/>
            <person name="Plessy C."/>
            <person name="Shibata K."/>
            <person name="Shiraki T."/>
            <person name="Suzuki S."/>
            <person name="Tagami M."/>
            <person name="Waki K."/>
            <person name="Watahiki A."/>
            <person name="Okamura-Oho Y."/>
            <person name="Suzuki H."/>
            <person name="Kawai J."/>
            <person name="Hayashizaki Y."/>
        </authorList>
    </citation>
    <scope>NUCLEOTIDE SEQUENCE [LARGE SCALE MRNA] (ISOFORM 1)</scope>
    <source>
        <strain>C57BL/6J</strain>
        <tissue>Skin</tissue>
        <tissue>Testis</tissue>
    </source>
</reference>
<reference key="4">
    <citation type="journal article" date="2005" name="J. Biol. Chem.">
        <title>Alternatively spliced lipin isoforms exhibit distinct expression pattern, subcellular localization, and role in adipogenesis.</title>
        <authorList>
            <person name="Peterfy M."/>
            <person name="Phan J."/>
            <person name="Reue K."/>
        </authorList>
    </citation>
    <scope>ALTERNATIVE SPLICING</scope>
    <scope>FUNCTION</scope>
    <scope>TISSUE SPECIFICITY</scope>
    <scope>SUBCELLULAR LOCATION</scope>
</reference>
<reference key="5">
    <citation type="journal article" date="2006" name="Cell Metab.">
        <title>Lipin 1 is an inducible amplifier of the hepatic PGC-1alpha/PPARalpha regulatory pathway.</title>
        <authorList>
            <person name="Finck B.N."/>
            <person name="Gropler M.C."/>
            <person name="Chen Z."/>
            <person name="Leone T.C."/>
            <person name="Croce M.A."/>
            <person name="Harris T.E."/>
            <person name="Lawrence J.C. Jr."/>
            <person name="Kelly D.P."/>
        </authorList>
    </citation>
    <scope>FUNCTION AS COACTIVATOR</scope>
    <scope>MUTAGENESIS OF ASP-712; ILE-726 AND LEU-727</scope>
    <scope>INDUCTION</scope>
    <scope>INTERACTION WITH PPARGC1A AND PPARA</scope>
</reference>
<reference key="6">
    <citation type="journal article" date="2007" name="J. Biol. Chem.">
        <title>Insulin controls subcellular localization and multisite phosphorylation of the phosphatidic acid phosphatase, lipin 1.</title>
        <authorList>
            <person name="Harris T.E."/>
            <person name="Huffman T.A."/>
            <person name="Chi A."/>
            <person name="Shabanowitz J."/>
            <person name="Hunt D.F."/>
            <person name="Kumar A."/>
            <person name="Lawrence J.C. Jr."/>
        </authorList>
    </citation>
    <scope>PROTEIN SEQUENCE OF 103-115</scope>
    <scope>PHOSPHORYLATION AT SER-106; SER-150; SER-285; SER-287; SER-293; THR-298; SER-328; SER-392; SER-468; SER-472; SER-483; SER-634; SER-635; SER-921 AND SER-923</scope>
    <scope>SUBCELLULAR LOCATION</scope>
    <scope>IDENTIFICATION BY MASS SPECTROMETRY</scope>
</reference>
<reference key="7">
    <citation type="journal article" date="2007" name="J. Biol. Chem.">
        <title>Three mammalian lipins act as phosphatidate phosphatases with distinct tissue expression patterns.</title>
        <authorList>
            <person name="Donkor J."/>
            <person name="Sariahmetoglu M."/>
            <person name="Dewald J."/>
            <person name="Brindley D.N."/>
            <person name="Reue K."/>
        </authorList>
    </citation>
    <scope>CATALYTIC ACTIVITY</scope>
    <scope>TISSUE SPECIFICITY</scope>
    <scope>COFACTOR</scope>
    <scope>ACTIVITY REGULATION</scope>
    <scope>FUNCTION</scope>
</reference>
<reference key="8">
    <citation type="journal article" date="2009" name="J. Biol. Chem.">
        <title>A conserved serine residue is required for the phosphatidate phosphatase activity but not the transcriptional coactivator functions of lipin-1 and lipin-2.</title>
        <authorList>
            <person name="Donkor J."/>
            <person name="Zhang P."/>
            <person name="Wong S."/>
            <person name="O'Loughlin L."/>
            <person name="Dewald J."/>
            <person name="Kok B.P."/>
            <person name="Brindley D.N."/>
            <person name="Reue K."/>
        </authorList>
    </citation>
    <scope>SUBCELLULAR LOCATION</scope>
    <scope>MUTAGENESIS OF SER-106</scope>
    <scope>MUTAGENESIS OF SER-724 (ISOFORM 2)</scope>
</reference>
<reference key="9">
    <citation type="journal article" date="2009" name="PLoS ONE">
        <title>Sumoylation regulates nuclear localization of lipin-1alpha in neuronal cells.</title>
        <authorList>
            <person name="Liu G.H."/>
            <person name="Gerace L."/>
        </authorList>
    </citation>
    <scope>SUMOYLATION AT LYS-599 AND LYS-629</scope>
    <scope>SUBCELLULAR LOCATION</scope>
    <scope>MUTAGENESIS OF LYS-599 AND LYS-629</scope>
    <scope>TISSUE SPECIFICITY</scope>
    <scope>INTERACTION WITH MEF2C</scope>
</reference>
<reference key="10">
    <citation type="journal article" date="2010" name="Cell">
        <title>A tissue-specific atlas of mouse protein phosphorylation and expression.</title>
        <authorList>
            <person name="Huttlin E.L."/>
            <person name="Jedrychowski M.P."/>
            <person name="Elias J.E."/>
            <person name="Goswami T."/>
            <person name="Rad R."/>
            <person name="Beausoleil S.A."/>
            <person name="Villen J."/>
            <person name="Haas W."/>
            <person name="Sowa M.E."/>
            <person name="Gygi S.P."/>
        </authorList>
    </citation>
    <scope>PHOSPHORYLATION [LARGE SCALE ANALYSIS] AT SER-328</scope>
    <scope>IDENTIFICATION BY MASS SPECTROMETRY [LARGE SCALE ANALYSIS]</scope>
    <source>
        <tissue>Brain</tissue>
        <tissue>Brown adipose tissue</tissue>
        <tissue>Heart</tissue>
        <tissue>Kidney</tissue>
        <tissue>Liver</tissue>
        <tissue>Lung</tissue>
        <tissue>Testis</tissue>
    </source>
</reference>
<reference key="11">
    <citation type="journal article" date="2011" name="Dev. Cell">
        <title>piRNA-associated germline nuage formation and spermatogenesis require MitoPLD profusogenic mitochondrial-surface lipid signaling.</title>
        <authorList>
            <person name="Huang H."/>
            <person name="Gao Q."/>
            <person name="Peng X."/>
            <person name="Choi S.Y."/>
            <person name="Sarma K."/>
            <person name="Ren H."/>
            <person name="Morris A.J."/>
            <person name="Frohman M.A."/>
        </authorList>
    </citation>
    <scope>FUNCTION (ISOFORM 1)</scope>
    <scope>SUBCELLULAR LOCATION (ISOFORM 1)</scope>
    <scope>MUTAGENESIS OF ASP-712</scope>
</reference>
<reference key="12">
    <citation type="journal article" date="2012" name="J. Biol. Chem.">
        <title>Nuclear envelope phosphatase-regulatory subunit 1 (formerly TMEM188) is the metazoan SPO7 ortholog and functions in the lipin activation pathway.</title>
        <authorList>
            <person name="Han S."/>
            <person name="Bahmanyar S."/>
            <person name="Zhang P."/>
            <person name="Grishin N."/>
            <person name="Oegema K."/>
            <person name="Crooke R."/>
            <person name="Graham M."/>
            <person name="Reue K."/>
            <person name="Dixon J.E."/>
            <person name="Goodman J.M."/>
        </authorList>
    </citation>
    <scope>TISSUE SPECIFICITY</scope>
    <scope>SUBCELLULAR LOCATION</scope>
    <scope>DEPHOSPHORYLATION BY CTDNEP1</scope>
</reference>
<reference key="13">
    <citation type="journal article" date="2013" name="J. Biol. Chem.">
        <title>Phosphorylation of lipin 1 and charge on the phosphatidic acid head group control its phosphatidic acid phosphatase activity and membrane association.</title>
        <authorList>
            <person name="Eaton J.M."/>
            <person name="Mullins G.R."/>
            <person name="Brindley D.N."/>
            <person name="Harris T.E."/>
        </authorList>
    </citation>
    <scope>PHOSPHORYLATION</scope>
</reference>
<dbReference type="EC" id="3.1.3.4" evidence="8"/>
<dbReference type="EMBL" id="AF412811">
    <property type="protein sequence ID" value="AAL07798.1"/>
    <property type="molecule type" value="mRNA"/>
</dbReference>
<dbReference type="EMBL" id="AF180471">
    <property type="protein sequence ID" value="AAF44296.1"/>
    <property type="molecule type" value="mRNA"/>
</dbReference>
<dbReference type="EMBL" id="AK019539">
    <property type="protein sequence ID" value="BAB31786.1"/>
    <property type="molecule type" value="mRNA"/>
</dbReference>
<dbReference type="EMBL" id="AK014526">
    <property type="protein sequence ID" value="BAB29412.1"/>
    <property type="molecule type" value="mRNA"/>
</dbReference>
<dbReference type="CCDS" id="CCDS25822.1">
    <molecule id="Q91ZP3-1"/>
</dbReference>
<dbReference type="CCDS" id="CCDS25823.1">
    <molecule id="Q91ZP3-2"/>
</dbReference>
<dbReference type="RefSeq" id="NP_001123884.1">
    <property type="nucleotide sequence ID" value="NM_001130412.1"/>
</dbReference>
<dbReference type="RefSeq" id="NP_056578.2">
    <property type="nucleotide sequence ID" value="NM_015763.4"/>
</dbReference>
<dbReference type="RefSeq" id="NP_766538.2">
    <property type="nucleotide sequence ID" value="NM_172950.3"/>
</dbReference>
<dbReference type="RefSeq" id="XP_006515051.1">
    <property type="nucleotide sequence ID" value="XM_006514988.3"/>
</dbReference>
<dbReference type="PDB" id="7KIH">
    <property type="method" value="X-ray"/>
    <property type="resolution" value="1.47 A"/>
    <property type="chains" value="A=491-581"/>
</dbReference>
<dbReference type="PDB" id="7KIL">
    <property type="method" value="X-ray"/>
    <property type="resolution" value="1.90 A"/>
    <property type="chains" value="A/B=491-581"/>
</dbReference>
<dbReference type="PDBsum" id="7KIH"/>
<dbReference type="PDBsum" id="7KIL"/>
<dbReference type="SMR" id="Q91ZP3"/>
<dbReference type="BioGRID" id="199700">
    <property type="interactions" value="2"/>
</dbReference>
<dbReference type="CORUM" id="Q91ZP3"/>
<dbReference type="FunCoup" id="Q91ZP3">
    <property type="interactions" value="2094"/>
</dbReference>
<dbReference type="IntAct" id="Q91ZP3">
    <property type="interactions" value="3"/>
</dbReference>
<dbReference type="MINT" id="Q91ZP3"/>
<dbReference type="STRING" id="10090.ENSMUSP00000070583"/>
<dbReference type="SwissLipids" id="SLP:000000601"/>
<dbReference type="GlyGen" id="Q91ZP3">
    <property type="glycosylation" value="3 sites, 3 N-linked glycans (3 sites)"/>
</dbReference>
<dbReference type="iPTMnet" id="Q91ZP3"/>
<dbReference type="PhosphoSitePlus" id="Q91ZP3"/>
<dbReference type="SwissPalm" id="Q91ZP3"/>
<dbReference type="jPOST" id="Q91ZP3"/>
<dbReference type="PaxDb" id="10090-ENSMUSP00000070583"/>
<dbReference type="ProteomicsDB" id="287258">
    <molecule id="Q91ZP3-1"/>
</dbReference>
<dbReference type="ProteomicsDB" id="287259">
    <molecule id="Q91ZP3-2"/>
</dbReference>
<dbReference type="Pumba" id="Q91ZP3"/>
<dbReference type="DNASU" id="14245"/>
<dbReference type="GeneID" id="14245"/>
<dbReference type="KEGG" id="mmu:14245"/>
<dbReference type="UCSC" id="uc007nbs.2">
    <molecule id="Q91ZP3-1"/>
    <property type="organism name" value="mouse"/>
</dbReference>
<dbReference type="AGR" id="MGI:1891340"/>
<dbReference type="CTD" id="23175"/>
<dbReference type="MGI" id="MGI:1891340">
    <property type="gene designation" value="Lpin1"/>
</dbReference>
<dbReference type="eggNOG" id="KOG2116">
    <property type="taxonomic scope" value="Eukaryota"/>
</dbReference>
<dbReference type="InParanoid" id="Q91ZP3"/>
<dbReference type="PhylomeDB" id="Q91ZP3"/>
<dbReference type="TreeFam" id="TF314095"/>
<dbReference type="BRENDA" id="3.1.3.4">
    <property type="organism ID" value="3474"/>
</dbReference>
<dbReference type="Reactome" id="R-MMU-1483191">
    <property type="pathway name" value="Synthesis of PC"/>
</dbReference>
<dbReference type="Reactome" id="R-MMU-1483213">
    <property type="pathway name" value="Synthesis of PE"/>
</dbReference>
<dbReference type="Reactome" id="R-MMU-4419969">
    <property type="pathway name" value="Depolymerization of the Nuclear Lamina"/>
</dbReference>
<dbReference type="Reactome" id="R-MMU-75109">
    <property type="pathway name" value="Triglyceride biosynthesis"/>
</dbReference>
<dbReference type="BioGRID-ORCS" id="14245">
    <property type="hits" value="4 hits in 79 CRISPR screens"/>
</dbReference>
<dbReference type="ChiTaRS" id="Lpin1">
    <property type="organism name" value="mouse"/>
</dbReference>
<dbReference type="PRO" id="PR:Q91ZP3"/>
<dbReference type="Proteomes" id="UP000000589">
    <property type="component" value="Unplaced"/>
</dbReference>
<dbReference type="RNAct" id="Q91ZP3">
    <property type="molecule type" value="protein"/>
</dbReference>
<dbReference type="GO" id="GO:0005737">
    <property type="term" value="C:cytoplasm"/>
    <property type="evidence" value="ECO:0000314"/>
    <property type="project" value="UniProtKB"/>
</dbReference>
<dbReference type="GO" id="GO:0005829">
    <property type="term" value="C:cytosol"/>
    <property type="evidence" value="ECO:0000250"/>
    <property type="project" value="UniProtKB"/>
</dbReference>
<dbReference type="GO" id="GO:0005783">
    <property type="term" value="C:endoplasmic reticulum"/>
    <property type="evidence" value="ECO:0000314"/>
    <property type="project" value="CACAO"/>
</dbReference>
<dbReference type="GO" id="GO:0005789">
    <property type="term" value="C:endoplasmic reticulum membrane"/>
    <property type="evidence" value="ECO:0000314"/>
    <property type="project" value="MGI"/>
</dbReference>
<dbReference type="GO" id="GO:0005741">
    <property type="term" value="C:mitochondrial outer membrane"/>
    <property type="evidence" value="ECO:0000314"/>
    <property type="project" value="UniProtKB"/>
</dbReference>
<dbReference type="GO" id="GO:0031965">
    <property type="term" value="C:nuclear membrane"/>
    <property type="evidence" value="ECO:0000314"/>
    <property type="project" value="UniProtKB"/>
</dbReference>
<dbReference type="GO" id="GO:0005634">
    <property type="term" value="C:nucleus"/>
    <property type="evidence" value="ECO:0000314"/>
    <property type="project" value="UniProtKB"/>
</dbReference>
<dbReference type="GO" id="GO:0005667">
    <property type="term" value="C:transcription regulator complex"/>
    <property type="evidence" value="ECO:0000314"/>
    <property type="project" value="MGI"/>
</dbReference>
<dbReference type="GO" id="GO:0042826">
    <property type="term" value="F:histone deacetylase binding"/>
    <property type="evidence" value="ECO:0000314"/>
    <property type="project" value="MGI"/>
</dbReference>
<dbReference type="GO" id="GO:0042975">
    <property type="term" value="F:peroxisome proliferator activated receptor binding"/>
    <property type="evidence" value="ECO:0000353"/>
    <property type="project" value="UniProtKB"/>
</dbReference>
<dbReference type="GO" id="GO:0008195">
    <property type="term" value="F:phosphatidate phosphatase activity"/>
    <property type="evidence" value="ECO:0000314"/>
    <property type="project" value="UniProtKB"/>
</dbReference>
<dbReference type="GO" id="GO:0061629">
    <property type="term" value="F:RNA polymerase II-specific DNA-binding transcription factor binding"/>
    <property type="evidence" value="ECO:0000314"/>
    <property type="project" value="MGI"/>
</dbReference>
<dbReference type="GO" id="GO:0003713">
    <property type="term" value="F:transcription coactivator activity"/>
    <property type="evidence" value="ECO:0000314"/>
    <property type="project" value="UniProtKB"/>
</dbReference>
<dbReference type="GO" id="GO:0030036">
    <property type="term" value="P:actin cytoskeleton organization"/>
    <property type="evidence" value="ECO:0000315"/>
    <property type="project" value="MGI"/>
</dbReference>
<dbReference type="GO" id="GO:0032869">
    <property type="term" value="P:cellular response to insulin stimulus"/>
    <property type="evidence" value="ECO:0000315"/>
    <property type="project" value="MGI"/>
</dbReference>
<dbReference type="GO" id="GO:0045444">
    <property type="term" value="P:fat cell differentiation"/>
    <property type="evidence" value="ECO:0000303"/>
    <property type="project" value="UniProtKB"/>
</dbReference>
<dbReference type="GO" id="GO:0009062">
    <property type="term" value="P:fatty acid catabolic process"/>
    <property type="evidence" value="ECO:0000314"/>
    <property type="project" value="UniProtKB"/>
</dbReference>
<dbReference type="GO" id="GO:0006955">
    <property type="term" value="P:immune response"/>
    <property type="evidence" value="ECO:0000315"/>
    <property type="project" value="MGI"/>
</dbReference>
<dbReference type="GO" id="GO:0006629">
    <property type="term" value="P:lipid metabolic process"/>
    <property type="evidence" value="ECO:0000315"/>
    <property type="project" value="MGI"/>
</dbReference>
<dbReference type="GO" id="GO:0000266">
    <property type="term" value="P:mitochondrial fission"/>
    <property type="evidence" value="ECO:0000314"/>
    <property type="project" value="UniProtKB"/>
</dbReference>
<dbReference type="GO" id="GO:0000122">
    <property type="term" value="P:negative regulation of transcription by RNA polymerase II"/>
    <property type="evidence" value="ECO:0000316"/>
    <property type="project" value="MGI"/>
</dbReference>
<dbReference type="GO" id="GO:0046473">
    <property type="term" value="P:phosphatidic acid metabolic process"/>
    <property type="evidence" value="ECO:0000250"/>
    <property type="project" value="UniProtKB"/>
</dbReference>
<dbReference type="GO" id="GO:0046337">
    <property type="term" value="P:phosphatidylethanolamine metabolic process"/>
    <property type="evidence" value="ECO:0000250"/>
    <property type="project" value="UniProtKB"/>
</dbReference>
<dbReference type="GO" id="GO:0120162">
    <property type="term" value="P:positive regulation of cold-induced thermogenesis"/>
    <property type="evidence" value="ECO:0000315"/>
    <property type="project" value="YuBioLab"/>
</dbReference>
<dbReference type="GO" id="GO:0045944">
    <property type="term" value="P:positive regulation of transcription by RNA polymerase II"/>
    <property type="evidence" value="ECO:0000314"/>
    <property type="project" value="UniProtKB"/>
</dbReference>
<dbReference type="GO" id="GO:0045598">
    <property type="term" value="P:regulation of fat cell differentiation"/>
    <property type="evidence" value="ECO:0000315"/>
    <property type="project" value="MGI"/>
</dbReference>
<dbReference type="GO" id="GO:0031529">
    <property type="term" value="P:ruffle organization"/>
    <property type="evidence" value="ECO:0000315"/>
    <property type="project" value="MGI"/>
</dbReference>
<dbReference type="GO" id="GO:0019432">
    <property type="term" value="P:triglyceride biosynthetic process"/>
    <property type="evidence" value="ECO:0000315"/>
    <property type="project" value="MGI"/>
</dbReference>
<dbReference type="GO" id="GO:0006642">
    <property type="term" value="P:triglyceride mobilization"/>
    <property type="evidence" value="ECO:0000314"/>
    <property type="project" value="UniProtKB"/>
</dbReference>
<dbReference type="InterPro" id="IPR036412">
    <property type="entry name" value="HAD-like_sf"/>
</dbReference>
<dbReference type="InterPro" id="IPR026058">
    <property type="entry name" value="LIPIN"/>
</dbReference>
<dbReference type="InterPro" id="IPR031703">
    <property type="entry name" value="Lipin_mid"/>
</dbReference>
<dbReference type="InterPro" id="IPR007651">
    <property type="entry name" value="Lipin_N"/>
</dbReference>
<dbReference type="InterPro" id="IPR013209">
    <property type="entry name" value="LNS2"/>
</dbReference>
<dbReference type="InterPro" id="IPR031315">
    <property type="entry name" value="LNS2/PITP"/>
</dbReference>
<dbReference type="PANTHER" id="PTHR12181">
    <property type="entry name" value="LIPIN"/>
    <property type="match status" value="1"/>
</dbReference>
<dbReference type="PANTHER" id="PTHR12181:SF10">
    <property type="entry name" value="PHOSPHATIDATE PHOSPHATASE LPIN1"/>
    <property type="match status" value="1"/>
</dbReference>
<dbReference type="Pfam" id="PF16876">
    <property type="entry name" value="Lipin_mid"/>
    <property type="match status" value="1"/>
</dbReference>
<dbReference type="Pfam" id="PF04571">
    <property type="entry name" value="Lipin_N"/>
    <property type="match status" value="1"/>
</dbReference>
<dbReference type="Pfam" id="PF08235">
    <property type="entry name" value="LNS2"/>
    <property type="match status" value="1"/>
</dbReference>
<dbReference type="SMART" id="SM00775">
    <property type="entry name" value="LNS2"/>
    <property type="match status" value="1"/>
</dbReference>
<dbReference type="SUPFAM" id="SSF56784">
    <property type="entry name" value="HAD-like"/>
    <property type="match status" value="1"/>
</dbReference>
<feature type="chain" id="PRO_0000209880" description="Phosphatidate phosphatase LPIN1">
    <location>
        <begin position="1"/>
        <end position="924"/>
    </location>
</feature>
<feature type="region of interest" description="N-LIP">
    <location>
        <begin position="1"/>
        <end position="108"/>
    </location>
</feature>
<feature type="region of interest" description="Disordered" evidence="3">
    <location>
        <begin position="133"/>
        <end position="248"/>
    </location>
</feature>
<feature type="region of interest" description="Disordered" evidence="3">
    <location>
        <begin position="269"/>
        <end position="297"/>
    </location>
</feature>
<feature type="region of interest" description="Disordered" evidence="3">
    <location>
        <begin position="314"/>
        <end position="426"/>
    </location>
</feature>
<feature type="region of interest" description="Disordered" evidence="3">
    <location>
        <begin position="446"/>
        <end position="490"/>
    </location>
</feature>
<feature type="region of interest" description="Disordered" evidence="3">
    <location>
        <begin position="627"/>
        <end position="649"/>
    </location>
</feature>
<feature type="region of interest" description="C-LIP">
    <location>
        <begin position="658"/>
        <end position="864"/>
    </location>
</feature>
<feature type="short sequence motif" description="Nuclear localization signal" evidence="2">
    <location>
        <begin position="153"/>
        <end position="158"/>
    </location>
</feature>
<feature type="short sequence motif" description="DXDXT motif" evidence="19">
    <location>
        <begin position="712"/>
        <end position="716"/>
    </location>
</feature>
<feature type="short sequence motif" description="LXXIL motif" evidence="17">
    <location>
        <begin position="723"/>
        <end position="727"/>
    </location>
</feature>
<feature type="compositionally biased region" description="Basic residues" evidence="3">
    <location>
        <begin position="152"/>
        <end position="161"/>
    </location>
</feature>
<feature type="compositionally biased region" description="Basic and acidic residues" evidence="3">
    <location>
        <begin position="162"/>
        <end position="172"/>
    </location>
</feature>
<feature type="compositionally biased region" description="Acidic residues" evidence="3">
    <location>
        <begin position="176"/>
        <end position="193"/>
    </location>
</feature>
<feature type="compositionally biased region" description="Polar residues" evidence="3">
    <location>
        <begin position="218"/>
        <end position="229"/>
    </location>
</feature>
<feature type="compositionally biased region" description="Polar residues" evidence="3">
    <location>
        <begin position="273"/>
        <end position="284"/>
    </location>
</feature>
<feature type="compositionally biased region" description="Basic and acidic residues" evidence="3">
    <location>
        <begin position="285"/>
        <end position="297"/>
    </location>
</feature>
<feature type="compositionally biased region" description="Polar residues" evidence="3">
    <location>
        <begin position="343"/>
        <end position="358"/>
    </location>
</feature>
<feature type="compositionally biased region" description="Polar residues" evidence="3">
    <location>
        <begin position="404"/>
        <end position="413"/>
    </location>
</feature>
<feature type="compositionally biased region" description="Polar residues" evidence="3">
    <location>
        <begin position="461"/>
        <end position="476"/>
    </location>
</feature>
<feature type="compositionally biased region" description="Basic and acidic residues" evidence="3">
    <location>
        <begin position="628"/>
        <end position="641"/>
    </location>
</feature>
<feature type="modified residue" description="Phosphoserine" evidence="7">
    <location>
        <position position="106"/>
    </location>
</feature>
<feature type="modified residue" description="Phosphoserine" evidence="7">
    <location>
        <position position="150"/>
    </location>
</feature>
<feature type="modified residue" description="Phosphoserine" evidence="7">
    <location>
        <position position="285"/>
    </location>
</feature>
<feature type="modified residue" description="Phosphoserine" evidence="7">
    <location>
        <position position="287"/>
    </location>
</feature>
<feature type="modified residue" description="Phosphoserine" evidence="7">
    <location>
        <position position="293"/>
    </location>
</feature>
<feature type="modified residue" description="Phosphothreonine" evidence="7">
    <location>
        <position position="298"/>
    </location>
</feature>
<feature type="modified residue" description="Phosphoserine" evidence="7 20">
    <location>
        <position position="328"/>
    </location>
</feature>
<feature type="modified residue" description="Phosphoserine" evidence="7">
    <location>
        <position position="392"/>
    </location>
</feature>
<feature type="modified residue" description="N6-acetyllysine" evidence="1">
    <location>
        <position position="459"/>
    </location>
</feature>
<feature type="modified residue" description="Phosphoserine" evidence="7">
    <location>
        <position position="468"/>
    </location>
</feature>
<feature type="modified residue" description="Phosphoserine" evidence="7">
    <location>
        <position position="472"/>
    </location>
</feature>
<feature type="modified residue" description="Phosphoserine" evidence="7">
    <location>
        <position position="483"/>
    </location>
</feature>
<feature type="modified residue" description="N6-acetyllysine" evidence="1">
    <location>
        <position position="629"/>
    </location>
</feature>
<feature type="modified residue" description="Phosphoserine" evidence="7">
    <location>
        <position position="634"/>
    </location>
</feature>
<feature type="modified residue" description="Phosphoserine" evidence="7">
    <location>
        <position position="635"/>
    </location>
</feature>
<feature type="modified residue" description="Phosphoserine" evidence="7">
    <location>
        <position position="921"/>
    </location>
</feature>
<feature type="modified residue" description="Phosphoserine" evidence="7">
    <location>
        <position position="923"/>
    </location>
</feature>
<feature type="cross-link" description="Glycyl lysine isopeptide (Lys-Gly) (interchain with G-Cter in SUMO)" evidence="10">
    <location>
        <position position="599"/>
    </location>
</feature>
<feature type="cross-link" description="Glycyl lysine isopeptide (Lys-Gly) (interchain with G-Cter in SUMO)" evidence="10">
    <location>
        <position position="629"/>
    </location>
</feature>
<feature type="splice variant" id="VSP_003134" description="In isoform 2." evidence="13">
    <location>
        <begin position="241"/>
        <end position="273"/>
    </location>
</feature>
<feature type="sequence variant" description="In allele FLD2J; causes the fatty liver dystrophy phenotype (fld), characterized by neonatal fatty liver and hypertriglyceridemia that resolve at weaning and neuropathy affecting peripheral nerve in adulthood." evidence="4">
    <original>G</original>
    <variation>R</variation>
    <location>
        <position position="84"/>
    </location>
</feature>
<feature type="mutagenesis site" description="Abolishes phosphorylation in response to insulin but has no effect on cellular location." evidence="9">
    <original>S</original>
    <variation>A</variation>
    <location>
        <position position="106"/>
    </location>
</feature>
<feature type="mutagenesis site" description="Reduces sumoylation. Abolishes sumoylation and nuclear localization; when associated with R-629." evidence="10">
    <original>K</original>
    <variation>R</variation>
    <location>
        <position position="599"/>
    </location>
</feature>
<feature type="mutagenesis site" description="Reduces sumoylation. Abolishes sumoylation and nuclear localization; when associated with R-599." evidence="10">
    <original>K</original>
    <variation>R</variation>
    <location>
        <position position="629"/>
    </location>
</feature>
<feature type="mutagenesis site" description="Abolishes phosphatidate phosphatase activity. No effect on interaction or coactivation with PPARA." evidence="6 11">
    <original>D</original>
    <variation>A</variation>
    <variation>E</variation>
    <location>
        <position position="712"/>
    </location>
</feature>
<feature type="mutagenesis site" description="Diminishes significantly the interaction and coactivation OF PPARA; when associated with F-727." evidence="6">
    <original>I</original>
    <variation>F</variation>
    <location>
        <position position="726"/>
    </location>
</feature>
<feature type="mutagenesis site" description="Diminishes significantly the interaction and coactivation OF PPARA; when associated with F-726." evidence="6">
    <original>L</original>
    <variation>F</variation>
    <location>
        <position position="727"/>
    </location>
</feature>
<feature type="sequence conflict" description="In Ref. 3; BAB31786/BAB29412." evidence="16" ref="3">
    <original>S</original>
    <variation>T</variation>
    <location>
        <position position="175"/>
    </location>
</feature>
<feature type="sequence conflict" description="In Ref. 3; BAB31786/BAB29412." evidence="16" ref="3">
    <original>H</original>
    <variation>Y</variation>
    <location>
        <position position="223"/>
    </location>
</feature>
<feature type="sequence conflict" description="In Ref. 2; AAF44296." evidence="16" ref="2">
    <original>G</original>
    <variation>V</variation>
    <location>
        <position position="465"/>
    </location>
</feature>
<feature type="strand" evidence="21">
    <location>
        <begin position="498"/>
        <end position="502"/>
    </location>
</feature>
<feature type="turn" evidence="21">
    <location>
        <begin position="506"/>
        <end position="509"/>
    </location>
</feature>
<feature type="helix" evidence="21">
    <location>
        <begin position="514"/>
        <end position="519"/>
    </location>
</feature>
<feature type="helix" evidence="21">
    <location>
        <begin position="524"/>
        <end position="529"/>
    </location>
</feature>
<feature type="helix" evidence="21">
    <location>
        <begin position="531"/>
        <end position="535"/>
    </location>
</feature>
<feature type="strand" evidence="21">
    <location>
        <begin position="540"/>
        <end position="543"/>
    </location>
</feature>
<feature type="strand" evidence="21">
    <location>
        <begin position="546"/>
        <end position="548"/>
    </location>
</feature>
<feature type="helix" evidence="21">
    <location>
        <begin position="550"/>
        <end position="563"/>
    </location>
</feature>
<feature type="helix" evidence="21">
    <location>
        <begin position="569"/>
        <end position="579"/>
    </location>
</feature>
<feature type="mutagenesis site" description="Abolishes phosphatidate phosphatase activity but does not prevent membrane association." evidence="9">
    <original>S</original>
    <variation>L</variation>
    <location sequence="Q91ZP3-2">
        <position position="724"/>
    </location>
</feature>